<organism>
    <name type="scientific">Mycobacterium bovis (strain BCG / Pasteur 1173P2)</name>
    <dbReference type="NCBI Taxonomy" id="410289"/>
    <lineage>
        <taxon>Bacteria</taxon>
        <taxon>Bacillati</taxon>
        <taxon>Actinomycetota</taxon>
        <taxon>Actinomycetes</taxon>
        <taxon>Mycobacteriales</taxon>
        <taxon>Mycobacteriaceae</taxon>
        <taxon>Mycobacterium</taxon>
        <taxon>Mycobacterium tuberculosis complex</taxon>
    </lineage>
</organism>
<gene>
    <name evidence="1" type="primary">dapB</name>
    <name type="ordered locus">BCG_2790c</name>
</gene>
<accession>A1KMB5</accession>
<comment type="function">
    <text evidence="1">Catalyzes the conversion of 4-hydroxy-tetrahydrodipicolinate (HTPA) to tetrahydrodipicolinate.</text>
</comment>
<comment type="catalytic activity">
    <reaction evidence="1">
        <text>(S)-2,3,4,5-tetrahydrodipicolinate + NAD(+) + H2O = (2S,4S)-4-hydroxy-2,3,4,5-tetrahydrodipicolinate + NADH + H(+)</text>
        <dbReference type="Rhea" id="RHEA:35323"/>
        <dbReference type="ChEBI" id="CHEBI:15377"/>
        <dbReference type="ChEBI" id="CHEBI:15378"/>
        <dbReference type="ChEBI" id="CHEBI:16845"/>
        <dbReference type="ChEBI" id="CHEBI:57540"/>
        <dbReference type="ChEBI" id="CHEBI:57945"/>
        <dbReference type="ChEBI" id="CHEBI:67139"/>
        <dbReference type="EC" id="1.17.1.8"/>
    </reaction>
</comment>
<comment type="catalytic activity">
    <reaction evidence="1">
        <text>(S)-2,3,4,5-tetrahydrodipicolinate + NADP(+) + H2O = (2S,4S)-4-hydroxy-2,3,4,5-tetrahydrodipicolinate + NADPH + H(+)</text>
        <dbReference type="Rhea" id="RHEA:35331"/>
        <dbReference type="ChEBI" id="CHEBI:15377"/>
        <dbReference type="ChEBI" id="CHEBI:15378"/>
        <dbReference type="ChEBI" id="CHEBI:16845"/>
        <dbReference type="ChEBI" id="CHEBI:57783"/>
        <dbReference type="ChEBI" id="CHEBI:58349"/>
        <dbReference type="ChEBI" id="CHEBI:67139"/>
        <dbReference type="EC" id="1.17.1.8"/>
    </reaction>
</comment>
<comment type="pathway">
    <text evidence="1">Amino-acid biosynthesis; L-lysine biosynthesis via DAP pathway; (S)-tetrahydrodipicolinate from L-aspartate: step 4/4.</text>
</comment>
<comment type="subcellular location">
    <subcellularLocation>
        <location evidence="1">Cytoplasm</location>
    </subcellularLocation>
</comment>
<comment type="similarity">
    <text evidence="1">Belongs to the DapB family.</text>
</comment>
<comment type="caution">
    <text evidence="2">Was originally thought to be a dihydrodipicolinate reductase (DHDPR), catalyzing the conversion of dihydrodipicolinate to tetrahydrodipicolinate. However, it was shown in E.coli that the substrate of the enzymatic reaction is not dihydrodipicolinate (DHDP) but in fact (2S,4S)-4-hydroxy-2,3,4,5-tetrahydrodipicolinic acid (HTPA), the product released by the DapA-catalyzed reaction.</text>
</comment>
<sequence>MRVGVLGAKGKVGATMVRAVAAADDLTLSAELDAGDPLSLLTDGNTEVVIDFTHPDVVMGNLEFLIDNGIHAVVGTTGFTAERFQQVESWLVAKPNTSVLIAPNFAIGAVLSMHFAKQAARFFDSAEVIELHHPHKADAPSGTAARTAKLIAEARKGLPPNPDATSTSLPGARGADVDGIPVHAVRLAGLVAHQEVLFGTEGEILTIRHDSLDRTSFVPGVLLAVRRIAERPGLTVGLEPLLDLH</sequence>
<protein>
    <recommendedName>
        <fullName evidence="1">4-hydroxy-tetrahydrodipicolinate reductase</fullName>
        <shortName evidence="1">HTPA reductase</shortName>
        <ecNumber evidence="1">1.17.1.8</ecNumber>
    </recommendedName>
</protein>
<evidence type="ECO:0000255" key="1">
    <source>
        <dbReference type="HAMAP-Rule" id="MF_00102"/>
    </source>
</evidence>
<evidence type="ECO:0000305" key="2"/>
<reference key="1">
    <citation type="journal article" date="2007" name="Proc. Natl. Acad. Sci. U.S.A.">
        <title>Genome plasticity of BCG and impact on vaccine efficacy.</title>
        <authorList>
            <person name="Brosch R."/>
            <person name="Gordon S.V."/>
            <person name="Garnier T."/>
            <person name="Eiglmeier K."/>
            <person name="Frigui W."/>
            <person name="Valenti P."/>
            <person name="Dos Santos S."/>
            <person name="Duthoy S."/>
            <person name="Lacroix C."/>
            <person name="Garcia-Pelayo C."/>
            <person name="Inwald J.K."/>
            <person name="Golby P."/>
            <person name="Garcia J.N."/>
            <person name="Hewinson R.G."/>
            <person name="Behr M.A."/>
            <person name="Quail M.A."/>
            <person name="Churcher C."/>
            <person name="Barrell B.G."/>
            <person name="Parkhill J."/>
            <person name="Cole S.T."/>
        </authorList>
    </citation>
    <scope>NUCLEOTIDE SEQUENCE [LARGE SCALE GENOMIC DNA]</scope>
    <source>
        <strain>BCG / Pasteur 1173P2</strain>
    </source>
</reference>
<feature type="chain" id="PRO_1000008596" description="4-hydroxy-tetrahydrodipicolinate reductase">
    <location>
        <begin position="1"/>
        <end position="245"/>
    </location>
</feature>
<feature type="active site" description="Proton donor/acceptor" evidence="1">
    <location>
        <position position="132"/>
    </location>
</feature>
<feature type="active site" description="Proton donor" evidence="1">
    <location>
        <position position="136"/>
    </location>
</feature>
<feature type="binding site" evidence="1">
    <location>
        <begin position="7"/>
        <end position="12"/>
    </location>
    <ligand>
        <name>NAD(+)</name>
        <dbReference type="ChEBI" id="CHEBI:57540"/>
    </ligand>
</feature>
<feature type="binding site" evidence="1">
    <location>
        <begin position="75"/>
        <end position="77"/>
    </location>
    <ligand>
        <name>NAD(+)</name>
        <dbReference type="ChEBI" id="CHEBI:57540"/>
    </ligand>
</feature>
<feature type="binding site" evidence="1">
    <location>
        <begin position="102"/>
        <end position="105"/>
    </location>
    <ligand>
        <name>NAD(+)</name>
        <dbReference type="ChEBI" id="CHEBI:57540"/>
    </ligand>
</feature>
<feature type="binding site" evidence="1">
    <location>
        <position position="133"/>
    </location>
    <ligand>
        <name>(S)-2,3,4,5-tetrahydrodipicolinate</name>
        <dbReference type="ChEBI" id="CHEBI:16845"/>
    </ligand>
</feature>
<feature type="binding site" evidence="1">
    <location>
        <begin position="142"/>
        <end position="143"/>
    </location>
    <ligand>
        <name>(S)-2,3,4,5-tetrahydrodipicolinate</name>
        <dbReference type="ChEBI" id="CHEBI:16845"/>
    </ligand>
</feature>
<name>DAPB_MYCBP</name>
<keyword id="KW-0028">Amino-acid biosynthesis</keyword>
<keyword id="KW-0963">Cytoplasm</keyword>
<keyword id="KW-0220">Diaminopimelate biosynthesis</keyword>
<keyword id="KW-0457">Lysine biosynthesis</keyword>
<keyword id="KW-0520">NAD</keyword>
<keyword id="KW-0521">NADP</keyword>
<keyword id="KW-0560">Oxidoreductase</keyword>
<dbReference type="EC" id="1.17.1.8" evidence="1"/>
<dbReference type="EMBL" id="AM408590">
    <property type="protein sequence ID" value="CAL72778.1"/>
    <property type="molecule type" value="Genomic_DNA"/>
</dbReference>
<dbReference type="RefSeq" id="WP_011799290.1">
    <property type="nucleotide sequence ID" value="NC_008769.1"/>
</dbReference>
<dbReference type="SMR" id="A1KMB5"/>
<dbReference type="KEGG" id="mbb:BCG_2790c"/>
<dbReference type="HOGENOM" id="CLU_047479_0_1_11"/>
<dbReference type="UniPathway" id="UPA00034">
    <property type="reaction ID" value="UER00018"/>
</dbReference>
<dbReference type="Proteomes" id="UP000001472">
    <property type="component" value="Chromosome"/>
</dbReference>
<dbReference type="GO" id="GO:0005829">
    <property type="term" value="C:cytosol"/>
    <property type="evidence" value="ECO:0007669"/>
    <property type="project" value="TreeGrafter"/>
</dbReference>
<dbReference type="GO" id="GO:0008839">
    <property type="term" value="F:4-hydroxy-tetrahydrodipicolinate reductase"/>
    <property type="evidence" value="ECO:0007669"/>
    <property type="project" value="UniProtKB-EC"/>
</dbReference>
<dbReference type="GO" id="GO:0051287">
    <property type="term" value="F:NAD binding"/>
    <property type="evidence" value="ECO:0007669"/>
    <property type="project" value="UniProtKB-UniRule"/>
</dbReference>
<dbReference type="GO" id="GO:0050661">
    <property type="term" value="F:NADP binding"/>
    <property type="evidence" value="ECO:0007669"/>
    <property type="project" value="UniProtKB-UniRule"/>
</dbReference>
<dbReference type="GO" id="GO:0016726">
    <property type="term" value="F:oxidoreductase activity, acting on CH or CH2 groups, NAD or NADP as acceptor"/>
    <property type="evidence" value="ECO:0007669"/>
    <property type="project" value="UniProtKB-UniRule"/>
</dbReference>
<dbReference type="GO" id="GO:0019877">
    <property type="term" value="P:diaminopimelate biosynthetic process"/>
    <property type="evidence" value="ECO:0007669"/>
    <property type="project" value="UniProtKB-UniRule"/>
</dbReference>
<dbReference type="GO" id="GO:0009089">
    <property type="term" value="P:lysine biosynthetic process via diaminopimelate"/>
    <property type="evidence" value="ECO:0007669"/>
    <property type="project" value="UniProtKB-UniRule"/>
</dbReference>
<dbReference type="CDD" id="cd02274">
    <property type="entry name" value="DHDPR_N"/>
    <property type="match status" value="1"/>
</dbReference>
<dbReference type="FunFam" id="3.30.360.10:FF:000009">
    <property type="entry name" value="4-hydroxy-tetrahydrodipicolinate reductase"/>
    <property type="match status" value="1"/>
</dbReference>
<dbReference type="Gene3D" id="3.30.360.10">
    <property type="entry name" value="Dihydrodipicolinate Reductase, domain 2"/>
    <property type="match status" value="1"/>
</dbReference>
<dbReference type="Gene3D" id="3.40.50.720">
    <property type="entry name" value="NAD(P)-binding Rossmann-like Domain"/>
    <property type="match status" value="1"/>
</dbReference>
<dbReference type="HAMAP" id="MF_00102">
    <property type="entry name" value="DapB"/>
    <property type="match status" value="1"/>
</dbReference>
<dbReference type="InterPro" id="IPR022663">
    <property type="entry name" value="DapB_C"/>
</dbReference>
<dbReference type="InterPro" id="IPR000846">
    <property type="entry name" value="DapB_N"/>
</dbReference>
<dbReference type="InterPro" id="IPR022664">
    <property type="entry name" value="DapB_N_CS"/>
</dbReference>
<dbReference type="InterPro" id="IPR023940">
    <property type="entry name" value="DHDPR_bac"/>
</dbReference>
<dbReference type="InterPro" id="IPR036291">
    <property type="entry name" value="NAD(P)-bd_dom_sf"/>
</dbReference>
<dbReference type="NCBIfam" id="TIGR00036">
    <property type="entry name" value="dapB"/>
    <property type="match status" value="1"/>
</dbReference>
<dbReference type="PANTHER" id="PTHR20836:SF0">
    <property type="entry name" value="4-HYDROXY-TETRAHYDRODIPICOLINATE REDUCTASE 1, CHLOROPLASTIC-RELATED"/>
    <property type="match status" value="1"/>
</dbReference>
<dbReference type="PANTHER" id="PTHR20836">
    <property type="entry name" value="DIHYDRODIPICOLINATE REDUCTASE"/>
    <property type="match status" value="1"/>
</dbReference>
<dbReference type="Pfam" id="PF05173">
    <property type="entry name" value="DapB_C"/>
    <property type="match status" value="1"/>
</dbReference>
<dbReference type="Pfam" id="PF01113">
    <property type="entry name" value="DapB_N"/>
    <property type="match status" value="1"/>
</dbReference>
<dbReference type="PIRSF" id="PIRSF000161">
    <property type="entry name" value="DHPR"/>
    <property type="match status" value="1"/>
</dbReference>
<dbReference type="SUPFAM" id="SSF55347">
    <property type="entry name" value="Glyceraldehyde-3-phosphate dehydrogenase-like, C-terminal domain"/>
    <property type="match status" value="1"/>
</dbReference>
<dbReference type="SUPFAM" id="SSF51735">
    <property type="entry name" value="NAD(P)-binding Rossmann-fold domains"/>
    <property type="match status" value="1"/>
</dbReference>
<dbReference type="PROSITE" id="PS01298">
    <property type="entry name" value="DAPB"/>
    <property type="match status" value="1"/>
</dbReference>
<proteinExistence type="inferred from homology"/>